<protein>
    <recommendedName>
        <fullName evidence="1">ATP synthase subunit c</fullName>
    </recommendedName>
    <alternativeName>
        <fullName evidence="1">ATP synthase F(0) sector subunit c</fullName>
    </alternativeName>
    <alternativeName>
        <fullName evidence="1">F-type ATPase subunit c</fullName>
        <shortName evidence="1">F-ATPase subunit c</shortName>
    </alternativeName>
    <alternativeName>
        <fullName evidence="1">Lipid-binding protein</fullName>
    </alternativeName>
</protein>
<reference key="1">
    <citation type="journal article" date="2006" name="PLoS Genet.">
        <title>Genome sequence of Rickettsia bellii illuminates the role of amoebae in gene exchanges between intracellular pathogens.</title>
        <authorList>
            <person name="Ogata H."/>
            <person name="La Scola B."/>
            <person name="Audic S."/>
            <person name="Renesto P."/>
            <person name="Blanc G."/>
            <person name="Robert C."/>
            <person name="Fournier P.-E."/>
            <person name="Claverie J.-M."/>
            <person name="Raoult D."/>
        </authorList>
    </citation>
    <scope>NUCLEOTIDE SEQUENCE [LARGE SCALE GENOMIC DNA]</scope>
    <source>
        <strain>RML369-C</strain>
    </source>
</reference>
<evidence type="ECO:0000255" key="1">
    <source>
        <dbReference type="HAMAP-Rule" id="MF_01396"/>
    </source>
</evidence>
<sequence length="74" mass="7683">MDMVSLKFIGVGCMAIGMLGAALGVSNIFSSLLNSIARNPSATEQLQRMALIGAGLAEAMGLFSFVIAMLLIFS</sequence>
<dbReference type="EMBL" id="CP000087">
    <property type="protein sequence ID" value="ABE05372.1"/>
    <property type="molecule type" value="Genomic_DNA"/>
</dbReference>
<dbReference type="RefSeq" id="WP_011477942.1">
    <property type="nucleotide sequence ID" value="NC_007940.1"/>
</dbReference>
<dbReference type="SMR" id="Q1RGZ2"/>
<dbReference type="KEGG" id="rbe:RBE_1291"/>
<dbReference type="eggNOG" id="COG0636">
    <property type="taxonomic scope" value="Bacteria"/>
</dbReference>
<dbReference type="HOGENOM" id="CLU_148047_4_0_5"/>
<dbReference type="OrthoDB" id="9811093at2"/>
<dbReference type="Proteomes" id="UP000001951">
    <property type="component" value="Chromosome"/>
</dbReference>
<dbReference type="GO" id="GO:0005886">
    <property type="term" value="C:plasma membrane"/>
    <property type="evidence" value="ECO:0007669"/>
    <property type="project" value="UniProtKB-SubCell"/>
</dbReference>
<dbReference type="GO" id="GO:0045259">
    <property type="term" value="C:proton-transporting ATP synthase complex"/>
    <property type="evidence" value="ECO:0007669"/>
    <property type="project" value="UniProtKB-KW"/>
</dbReference>
<dbReference type="GO" id="GO:0033177">
    <property type="term" value="C:proton-transporting two-sector ATPase complex, proton-transporting domain"/>
    <property type="evidence" value="ECO:0007669"/>
    <property type="project" value="InterPro"/>
</dbReference>
<dbReference type="GO" id="GO:0008289">
    <property type="term" value="F:lipid binding"/>
    <property type="evidence" value="ECO:0007669"/>
    <property type="project" value="UniProtKB-KW"/>
</dbReference>
<dbReference type="GO" id="GO:0046933">
    <property type="term" value="F:proton-transporting ATP synthase activity, rotational mechanism"/>
    <property type="evidence" value="ECO:0007669"/>
    <property type="project" value="UniProtKB-UniRule"/>
</dbReference>
<dbReference type="CDD" id="cd18182">
    <property type="entry name" value="ATP-synt_Fo_c_ATP5G3"/>
    <property type="match status" value="1"/>
</dbReference>
<dbReference type="Gene3D" id="1.20.20.10">
    <property type="entry name" value="F1F0 ATP synthase subunit C"/>
    <property type="match status" value="1"/>
</dbReference>
<dbReference type="HAMAP" id="MF_01396">
    <property type="entry name" value="ATP_synth_c_bact"/>
    <property type="match status" value="1"/>
</dbReference>
<dbReference type="InterPro" id="IPR000454">
    <property type="entry name" value="ATP_synth_F0_csu"/>
</dbReference>
<dbReference type="InterPro" id="IPR020537">
    <property type="entry name" value="ATP_synth_F0_csu_DDCD_BS"/>
</dbReference>
<dbReference type="InterPro" id="IPR038662">
    <property type="entry name" value="ATP_synth_F0_csu_sf"/>
</dbReference>
<dbReference type="InterPro" id="IPR002379">
    <property type="entry name" value="ATPase_proteolipid_c-like_dom"/>
</dbReference>
<dbReference type="InterPro" id="IPR035921">
    <property type="entry name" value="F/V-ATP_Csub_sf"/>
</dbReference>
<dbReference type="NCBIfam" id="NF005733">
    <property type="entry name" value="PRK07558.1"/>
    <property type="match status" value="1"/>
</dbReference>
<dbReference type="PANTHER" id="PTHR10031">
    <property type="entry name" value="ATP SYNTHASE LIPID-BINDING PROTEIN, MITOCHONDRIAL"/>
    <property type="match status" value="1"/>
</dbReference>
<dbReference type="PANTHER" id="PTHR10031:SF0">
    <property type="entry name" value="ATPASE PROTEIN 9"/>
    <property type="match status" value="1"/>
</dbReference>
<dbReference type="Pfam" id="PF00137">
    <property type="entry name" value="ATP-synt_C"/>
    <property type="match status" value="1"/>
</dbReference>
<dbReference type="PRINTS" id="PR00124">
    <property type="entry name" value="ATPASEC"/>
</dbReference>
<dbReference type="SUPFAM" id="SSF81333">
    <property type="entry name" value="F1F0 ATP synthase subunit C"/>
    <property type="match status" value="1"/>
</dbReference>
<dbReference type="PROSITE" id="PS00605">
    <property type="entry name" value="ATPASE_C"/>
    <property type="match status" value="1"/>
</dbReference>
<comment type="function">
    <text evidence="1">F(1)F(0) ATP synthase produces ATP from ADP in the presence of a proton or sodium gradient. F-type ATPases consist of two structural domains, F(1) containing the extramembraneous catalytic core and F(0) containing the membrane proton channel, linked together by a central stalk and a peripheral stalk. During catalysis, ATP synthesis in the catalytic domain of F(1) is coupled via a rotary mechanism of the central stalk subunits to proton translocation.</text>
</comment>
<comment type="function">
    <text evidence="1">Key component of the F(0) channel; it plays a direct role in translocation across the membrane. A homomeric c-ring of between 10-14 subunits forms the central stalk rotor element with the F(1) delta and epsilon subunits.</text>
</comment>
<comment type="subunit">
    <text evidence="1">F-type ATPases have 2 components, F(1) - the catalytic core - and F(0) - the membrane proton channel. F(1) has five subunits: alpha(3), beta(3), gamma(1), delta(1), epsilon(1). F(0) has three main subunits: a(1), b(2) and c(10-14). The alpha and beta chains form an alternating ring which encloses part of the gamma chain. F(1) is attached to F(0) by a central stalk formed by the gamma and epsilon chains, while a peripheral stalk is formed by the delta and b chains.</text>
</comment>
<comment type="subcellular location">
    <subcellularLocation>
        <location evidence="1">Cell inner membrane</location>
        <topology evidence="1">Multi-pass membrane protein</topology>
    </subcellularLocation>
</comment>
<comment type="similarity">
    <text evidence="1">Belongs to the ATPase C chain family.</text>
</comment>
<gene>
    <name evidence="1" type="primary">atpE</name>
    <name type="ordered locus">RBE_1291</name>
</gene>
<proteinExistence type="inferred from homology"/>
<accession>Q1RGZ2</accession>
<organism>
    <name type="scientific">Rickettsia bellii (strain RML369-C)</name>
    <dbReference type="NCBI Taxonomy" id="336407"/>
    <lineage>
        <taxon>Bacteria</taxon>
        <taxon>Pseudomonadati</taxon>
        <taxon>Pseudomonadota</taxon>
        <taxon>Alphaproteobacteria</taxon>
        <taxon>Rickettsiales</taxon>
        <taxon>Rickettsiaceae</taxon>
        <taxon>Rickettsieae</taxon>
        <taxon>Rickettsia</taxon>
        <taxon>belli group</taxon>
    </lineage>
</organism>
<name>ATPL_RICBR</name>
<feature type="chain" id="PRO_0000288728" description="ATP synthase subunit c">
    <location>
        <begin position="1"/>
        <end position="74"/>
    </location>
</feature>
<feature type="transmembrane region" description="Helical" evidence="1">
    <location>
        <begin position="8"/>
        <end position="28"/>
    </location>
</feature>
<feature type="transmembrane region" description="Helical" evidence="1">
    <location>
        <begin position="52"/>
        <end position="72"/>
    </location>
</feature>
<feature type="site" description="Reversibly protonated during proton transport" evidence="1">
    <location>
        <position position="58"/>
    </location>
</feature>
<keyword id="KW-0066">ATP synthesis</keyword>
<keyword id="KW-0997">Cell inner membrane</keyword>
<keyword id="KW-1003">Cell membrane</keyword>
<keyword id="KW-0138">CF(0)</keyword>
<keyword id="KW-0375">Hydrogen ion transport</keyword>
<keyword id="KW-0406">Ion transport</keyword>
<keyword id="KW-0446">Lipid-binding</keyword>
<keyword id="KW-0472">Membrane</keyword>
<keyword id="KW-0812">Transmembrane</keyword>
<keyword id="KW-1133">Transmembrane helix</keyword>
<keyword id="KW-0813">Transport</keyword>